<dbReference type="EMBL" id="CP001079">
    <property type="protein sequence ID" value="ACM49516.1"/>
    <property type="molecule type" value="Genomic_DNA"/>
</dbReference>
<dbReference type="SMR" id="B9KJ54"/>
<dbReference type="STRING" id="320483.AMF_680"/>
<dbReference type="KEGG" id="amf:AMF_680"/>
<dbReference type="eggNOG" id="COG0256">
    <property type="taxonomic scope" value="Bacteria"/>
</dbReference>
<dbReference type="HOGENOM" id="CLU_098841_0_1_5"/>
<dbReference type="Proteomes" id="UP000007307">
    <property type="component" value="Chromosome"/>
</dbReference>
<dbReference type="GO" id="GO:0022625">
    <property type="term" value="C:cytosolic large ribosomal subunit"/>
    <property type="evidence" value="ECO:0007669"/>
    <property type="project" value="TreeGrafter"/>
</dbReference>
<dbReference type="GO" id="GO:0008097">
    <property type="term" value="F:5S rRNA binding"/>
    <property type="evidence" value="ECO:0007669"/>
    <property type="project" value="TreeGrafter"/>
</dbReference>
<dbReference type="GO" id="GO:0003735">
    <property type="term" value="F:structural constituent of ribosome"/>
    <property type="evidence" value="ECO:0007669"/>
    <property type="project" value="InterPro"/>
</dbReference>
<dbReference type="GO" id="GO:0006412">
    <property type="term" value="P:translation"/>
    <property type="evidence" value="ECO:0007669"/>
    <property type="project" value="UniProtKB-UniRule"/>
</dbReference>
<dbReference type="CDD" id="cd00432">
    <property type="entry name" value="Ribosomal_L18_L5e"/>
    <property type="match status" value="1"/>
</dbReference>
<dbReference type="Gene3D" id="3.30.420.100">
    <property type="match status" value="1"/>
</dbReference>
<dbReference type="HAMAP" id="MF_01337_B">
    <property type="entry name" value="Ribosomal_uL18_B"/>
    <property type="match status" value="1"/>
</dbReference>
<dbReference type="InterPro" id="IPR004389">
    <property type="entry name" value="Ribosomal_uL18_bac-type"/>
</dbReference>
<dbReference type="InterPro" id="IPR005484">
    <property type="entry name" value="Ribosomal_uL18_bac/euk"/>
</dbReference>
<dbReference type="NCBIfam" id="TIGR00060">
    <property type="entry name" value="L18_bact"/>
    <property type="match status" value="1"/>
</dbReference>
<dbReference type="PANTHER" id="PTHR12899">
    <property type="entry name" value="39S RIBOSOMAL PROTEIN L18, MITOCHONDRIAL"/>
    <property type="match status" value="1"/>
</dbReference>
<dbReference type="PANTHER" id="PTHR12899:SF3">
    <property type="entry name" value="LARGE RIBOSOMAL SUBUNIT PROTEIN UL18M"/>
    <property type="match status" value="1"/>
</dbReference>
<dbReference type="Pfam" id="PF00861">
    <property type="entry name" value="Ribosomal_L18p"/>
    <property type="match status" value="1"/>
</dbReference>
<dbReference type="SUPFAM" id="SSF53137">
    <property type="entry name" value="Translational machinery components"/>
    <property type="match status" value="1"/>
</dbReference>
<proteinExistence type="inferred from homology"/>
<sequence>MEPAMSLCDLKRATRRKRRVRLKLRSLSSVRLSVFKSNRHFYAQLIDDEKGATLAAASTLEPDVLATAKRRVNSEAARVVARLFAGRLDGLDANYRKFVLDRGSCRYIGVVAAFADELRSLGFEF</sequence>
<protein>
    <recommendedName>
        <fullName evidence="1">Large ribosomal subunit protein uL18</fullName>
    </recommendedName>
    <alternativeName>
        <fullName evidence="2">50S ribosomal protein L18</fullName>
    </alternativeName>
</protein>
<gene>
    <name evidence="1" type="primary">rplR</name>
    <name type="ordered locus">AMF_680</name>
</gene>
<feature type="chain" id="PRO_1000166202" description="Large ribosomal subunit protein uL18">
    <location>
        <begin position="1"/>
        <end position="125"/>
    </location>
</feature>
<keyword id="KW-1185">Reference proteome</keyword>
<keyword id="KW-0687">Ribonucleoprotein</keyword>
<keyword id="KW-0689">Ribosomal protein</keyword>
<keyword id="KW-0694">RNA-binding</keyword>
<keyword id="KW-0699">rRNA-binding</keyword>
<reference key="1">
    <citation type="journal article" date="2009" name="BMC Genomics">
        <title>Conservation in the face of diversity: multistrain analysis of an intracellular bacterium.</title>
        <authorList>
            <person name="Dark M.J."/>
            <person name="Herndon D.R."/>
            <person name="Kappmeyer L.S."/>
            <person name="Gonzales M.P."/>
            <person name="Nordeen E."/>
            <person name="Palmer G.H."/>
            <person name="Knowles D.P. Jr."/>
            <person name="Brayton K.A."/>
        </authorList>
    </citation>
    <scope>NUCLEOTIDE SEQUENCE [LARGE SCALE GENOMIC DNA]</scope>
    <source>
        <strain>Florida</strain>
    </source>
</reference>
<organism>
    <name type="scientific">Anaplasma marginale (strain Florida)</name>
    <dbReference type="NCBI Taxonomy" id="320483"/>
    <lineage>
        <taxon>Bacteria</taxon>
        <taxon>Pseudomonadati</taxon>
        <taxon>Pseudomonadota</taxon>
        <taxon>Alphaproteobacteria</taxon>
        <taxon>Rickettsiales</taxon>
        <taxon>Anaplasmataceae</taxon>
        <taxon>Anaplasma</taxon>
    </lineage>
</organism>
<name>RL18_ANAMF</name>
<comment type="function">
    <text evidence="1">This is one of the proteins that bind and probably mediate the attachment of the 5S RNA into the large ribosomal subunit, where it forms part of the central protuberance.</text>
</comment>
<comment type="subunit">
    <text evidence="1">Part of the 50S ribosomal subunit; part of the 5S rRNA/L5/L18/L25 subcomplex. Contacts the 5S and 23S rRNAs.</text>
</comment>
<comment type="similarity">
    <text evidence="1">Belongs to the universal ribosomal protein uL18 family.</text>
</comment>
<accession>B9KJ54</accession>
<evidence type="ECO:0000255" key="1">
    <source>
        <dbReference type="HAMAP-Rule" id="MF_01337"/>
    </source>
</evidence>
<evidence type="ECO:0000305" key="2"/>